<organism>
    <name type="scientific">Xylella fastidiosa (strain M23)</name>
    <dbReference type="NCBI Taxonomy" id="405441"/>
    <lineage>
        <taxon>Bacteria</taxon>
        <taxon>Pseudomonadati</taxon>
        <taxon>Pseudomonadota</taxon>
        <taxon>Gammaproteobacteria</taxon>
        <taxon>Lysobacterales</taxon>
        <taxon>Lysobacteraceae</taxon>
        <taxon>Xylella</taxon>
    </lineage>
</organism>
<dbReference type="EMBL" id="CP001011">
    <property type="protein sequence ID" value="ACB92000.1"/>
    <property type="molecule type" value="Genomic_DNA"/>
</dbReference>
<dbReference type="RefSeq" id="WP_004090541.1">
    <property type="nucleotide sequence ID" value="NC_010577.1"/>
</dbReference>
<dbReference type="SMR" id="B2I925"/>
<dbReference type="KEGG" id="xfn:XfasM23_0556"/>
<dbReference type="HOGENOM" id="CLU_161438_1_1_6"/>
<dbReference type="Proteomes" id="UP000001698">
    <property type="component" value="Chromosome"/>
</dbReference>
<dbReference type="Gene3D" id="3.30.70.260">
    <property type="match status" value="1"/>
</dbReference>
<dbReference type="HAMAP" id="MF_00659">
    <property type="entry name" value="UPF0250"/>
    <property type="match status" value="1"/>
</dbReference>
<dbReference type="InterPro" id="IPR007454">
    <property type="entry name" value="UPF0250_YbeD-like"/>
</dbReference>
<dbReference type="InterPro" id="IPR027471">
    <property type="entry name" value="YbeD-like_sf"/>
</dbReference>
<dbReference type="NCBIfam" id="NF002066">
    <property type="entry name" value="PRK00907.1"/>
    <property type="match status" value="1"/>
</dbReference>
<dbReference type="Pfam" id="PF04359">
    <property type="entry name" value="DUF493"/>
    <property type="match status" value="1"/>
</dbReference>
<dbReference type="SUPFAM" id="SSF117991">
    <property type="entry name" value="YbeD/HP0495-like"/>
    <property type="match status" value="1"/>
</dbReference>
<reference key="1">
    <citation type="journal article" date="2010" name="J. Bacteriol.">
        <title>Whole genome sequences of two Xylella fastidiosa strains (M12 and M23) causing almond leaf scorch disease in California.</title>
        <authorList>
            <person name="Chen J."/>
            <person name="Xie G."/>
            <person name="Han S."/>
            <person name="Chertkov O."/>
            <person name="Sims D."/>
            <person name="Civerolo E.L."/>
        </authorList>
    </citation>
    <scope>NUCLEOTIDE SEQUENCE [LARGE SCALE GENOMIC DNA]</scope>
    <source>
        <strain>M23</strain>
    </source>
</reference>
<protein>
    <recommendedName>
        <fullName evidence="1">UPF0250 protein XfasM23_0556</fullName>
    </recommendedName>
</protein>
<comment type="similarity">
    <text evidence="1">Belongs to the UPF0250 family.</text>
</comment>
<proteinExistence type="inferred from homology"/>
<feature type="chain" id="PRO_1000131266" description="UPF0250 protein XfasM23_0556">
    <location>
        <begin position="1"/>
        <end position="92"/>
    </location>
</feature>
<name>Y556_XYLF2</name>
<gene>
    <name type="ordered locus">XfasM23_0556</name>
</gene>
<accession>B2I925</accession>
<sequence length="92" mass="10435">MEIKSDHSEHGFQFPGTFELSVVGTAGKALETELPRLLALCGVELVQERISWKHSSTGKYVSVRIGFRALDREQYDAAHQVLRDHPEVKWTL</sequence>
<evidence type="ECO:0000255" key="1">
    <source>
        <dbReference type="HAMAP-Rule" id="MF_00659"/>
    </source>
</evidence>